<dbReference type="EC" id="2.1.1.148" evidence="1"/>
<dbReference type="EMBL" id="BA000002">
    <property type="protein sequence ID" value="BAA81074.2"/>
    <property type="molecule type" value="Genomic_DNA"/>
</dbReference>
<dbReference type="PIR" id="B72511">
    <property type="entry name" value="B72511"/>
</dbReference>
<dbReference type="STRING" id="272557.APE_2064.1"/>
<dbReference type="EnsemblBacteria" id="BAA81074">
    <property type="protein sequence ID" value="BAA81074"/>
    <property type="gene ID" value="APE_2064.1"/>
</dbReference>
<dbReference type="KEGG" id="ape:APE_2064.1"/>
<dbReference type="PATRIC" id="fig|272557.25.peg.1371"/>
<dbReference type="eggNOG" id="arCOG01883">
    <property type="taxonomic scope" value="Archaea"/>
</dbReference>
<dbReference type="UniPathway" id="UPA00575"/>
<dbReference type="Proteomes" id="UP000002518">
    <property type="component" value="Chromosome"/>
</dbReference>
<dbReference type="GO" id="GO:0050660">
    <property type="term" value="F:flavin adenine dinucleotide binding"/>
    <property type="evidence" value="ECO:0007669"/>
    <property type="project" value="InterPro"/>
</dbReference>
<dbReference type="GO" id="GO:0070402">
    <property type="term" value="F:NADPH binding"/>
    <property type="evidence" value="ECO:0007669"/>
    <property type="project" value="TreeGrafter"/>
</dbReference>
<dbReference type="GO" id="GO:0050797">
    <property type="term" value="F:thymidylate synthase (FAD) activity"/>
    <property type="evidence" value="ECO:0007669"/>
    <property type="project" value="UniProtKB-UniRule"/>
</dbReference>
<dbReference type="GO" id="GO:0004799">
    <property type="term" value="F:thymidylate synthase activity"/>
    <property type="evidence" value="ECO:0007669"/>
    <property type="project" value="TreeGrafter"/>
</dbReference>
<dbReference type="GO" id="GO:0006231">
    <property type="term" value="P:dTMP biosynthetic process"/>
    <property type="evidence" value="ECO:0007669"/>
    <property type="project" value="UniProtKB-UniRule"/>
</dbReference>
<dbReference type="GO" id="GO:0006235">
    <property type="term" value="P:dTTP biosynthetic process"/>
    <property type="evidence" value="ECO:0007669"/>
    <property type="project" value="UniProtKB-UniRule"/>
</dbReference>
<dbReference type="GO" id="GO:0032259">
    <property type="term" value="P:methylation"/>
    <property type="evidence" value="ECO:0007669"/>
    <property type="project" value="UniProtKB-KW"/>
</dbReference>
<dbReference type="CDD" id="cd20175">
    <property type="entry name" value="ThyX"/>
    <property type="match status" value="1"/>
</dbReference>
<dbReference type="Gene3D" id="3.30.1360.170">
    <property type="match status" value="1"/>
</dbReference>
<dbReference type="HAMAP" id="MF_01408">
    <property type="entry name" value="ThyX"/>
    <property type="match status" value="1"/>
</dbReference>
<dbReference type="InterPro" id="IPR003669">
    <property type="entry name" value="Thymidylate_synthase_ThyX"/>
</dbReference>
<dbReference type="InterPro" id="IPR036098">
    <property type="entry name" value="Thymidylate_synthase_ThyX_sf"/>
</dbReference>
<dbReference type="PANTHER" id="PTHR34934">
    <property type="entry name" value="FLAVIN-DEPENDENT THYMIDYLATE SYNTHASE"/>
    <property type="match status" value="1"/>
</dbReference>
<dbReference type="PANTHER" id="PTHR34934:SF1">
    <property type="entry name" value="FLAVIN-DEPENDENT THYMIDYLATE SYNTHASE"/>
    <property type="match status" value="1"/>
</dbReference>
<dbReference type="Pfam" id="PF02511">
    <property type="entry name" value="Thy1"/>
    <property type="match status" value="1"/>
</dbReference>
<dbReference type="SUPFAM" id="SSF69796">
    <property type="entry name" value="Thymidylate synthase-complementing protein Thy1"/>
    <property type="match status" value="1"/>
</dbReference>
<dbReference type="PROSITE" id="PS51331">
    <property type="entry name" value="THYX"/>
    <property type="match status" value="1"/>
</dbReference>
<sequence>MAASLEKAGLGISVRLLEYTGDGERIVAVASKVSLSRSPAERLLAIGEDEVETWILETFRRQHFSPWEHSVYTFMVEGLSRVASHQLVRHRVASYTQLSHRYSEGYLREAALKACESIGLDCPSKPAETEGGRKAAYRLYSQALERAARDFGASERFAIAAKAFVIPPTILARGDGGDGVVEAYLRSAAIYYSLLSRGARREDARYILPDALRTRIVVTMNARELIQVFFPLRMCTRAQWEIRHIAWLLWRELSRVHPRLFRWAGPSCVLRENTLRTTPASLYSYLEGVERFTQPRCPELVENKAIPGCLRQAASVAPPGDGEYE</sequence>
<organism>
    <name type="scientific">Aeropyrum pernix (strain ATCC 700893 / DSM 11879 / JCM 9820 / NBRC 100138 / K1)</name>
    <dbReference type="NCBI Taxonomy" id="272557"/>
    <lineage>
        <taxon>Archaea</taxon>
        <taxon>Thermoproteota</taxon>
        <taxon>Thermoprotei</taxon>
        <taxon>Desulfurococcales</taxon>
        <taxon>Desulfurococcaceae</taxon>
        <taxon>Aeropyrum</taxon>
    </lineage>
</organism>
<proteinExistence type="inferred from homology"/>
<feature type="chain" id="PRO_0000175588" description="Flavin-dependent thymidylate synthase">
    <location>
        <begin position="1"/>
        <end position="325"/>
    </location>
</feature>
<feature type="domain" description="ThyX" evidence="2">
    <location>
        <begin position="12"/>
        <end position="267"/>
    </location>
</feature>
<feature type="region of interest" description="Insert">
    <location>
        <begin position="110"/>
        <end position="159"/>
    </location>
</feature>
<feature type="short sequence motif" description="ThyX motif" evidence="1">
    <location>
        <begin position="89"/>
        <end position="99"/>
    </location>
</feature>
<feature type="active site" description="Involved in ionization of N3 of dUMP, leading to its activation" evidence="1">
    <location>
        <position position="233"/>
    </location>
</feature>
<feature type="binding site" evidence="1">
    <location>
        <position position="65"/>
    </location>
    <ligand>
        <name>FAD</name>
        <dbReference type="ChEBI" id="CHEBI:57692"/>
        <note>ligand shared between neighboring subunits</note>
    </ligand>
</feature>
<feature type="binding site" evidence="1">
    <location>
        <begin position="86"/>
        <end position="89"/>
    </location>
    <ligand>
        <name>dUMP</name>
        <dbReference type="ChEBI" id="CHEBI:246422"/>
        <note>ligand shared between dimeric partners</note>
    </ligand>
</feature>
<feature type="binding site" evidence="1">
    <location>
        <begin position="89"/>
        <end position="91"/>
    </location>
    <ligand>
        <name>FAD</name>
        <dbReference type="ChEBI" id="CHEBI:57692"/>
        <note>ligand shared between neighboring subunits</note>
    </ligand>
</feature>
<feature type="binding site" description="in other chain" evidence="1">
    <location>
        <begin position="97"/>
        <end position="101"/>
    </location>
    <ligand>
        <name>dUMP</name>
        <dbReference type="ChEBI" id="CHEBI:246422"/>
        <note>ligand shared between dimeric partners</note>
    </ligand>
</feature>
<feature type="binding site" evidence="1">
    <location>
        <position position="97"/>
    </location>
    <ligand>
        <name>FAD</name>
        <dbReference type="ChEBI" id="CHEBI:57692"/>
        <note>ligand shared between neighboring subunits</note>
    </ligand>
</feature>
<feature type="binding site" description="in other chain" evidence="1">
    <location>
        <position position="205"/>
    </location>
    <ligand>
        <name>dUMP</name>
        <dbReference type="ChEBI" id="CHEBI:246422"/>
        <note>ligand shared between dimeric partners</note>
    </ligand>
</feature>
<feature type="binding site" evidence="1">
    <location>
        <begin position="221"/>
        <end position="223"/>
    </location>
    <ligand>
        <name>FAD</name>
        <dbReference type="ChEBI" id="CHEBI:57692"/>
        <note>ligand shared between neighboring subunits</note>
    </ligand>
</feature>
<feature type="binding site" evidence="1">
    <location>
        <position position="233"/>
    </location>
    <ligand>
        <name>dUMP</name>
        <dbReference type="ChEBI" id="CHEBI:246422"/>
        <note>ligand shared between dimeric partners</note>
    </ligand>
</feature>
<keyword id="KW-0274">FAD</keyword>
<keyword id="KW-0285">Flavoprotein</keyword>
<keyword id="KW-0489">Methyltransferase</keyword>
<keyword id="KW-0521">NADP</keyword>
<keyword id="KW-0545">Nucleotide biosynthesis</keyword>
<keyword id="KW-1185">Reference proteome</keyword>
<keyword id="KW-0808">Transferase</keyword>
<gene>
    <name evidence="1" type="primary">thyX</name>
    <name type="ordered locus">APE_2064.1</name>
</gene>
<evidence type="ECO:0000255" key="1">
    <source>
        <dbReference type="HAMAP-Rule" id="MF_01408"/>
    </source>
</evidence>
<evidence type="ECO:0000255" key="2">
    <source>
        <dbReference type="PROSITE-ProRule" id="PRU00661"/>
    </source>
</evidence>
<reference key="1">
    <citation type="journal article" date="1999" name="DNA Res.">
        <title>Complete genome sequence of an aerobic hyper-thermophilic crenarchaeon, Aeropyrum pernix K1.</title>
        <authorList>
            <person name="Kawarabayasi Y."/>
            <person name="Hino Y."/>
            <person name="Horikawa H."/>
            <person name="Yamazaki S."/>
            <person name="Haikawa Y."/>
            <person name="Jin-no K."/>
            <person name="Takahashi M."/>
            <person name="Sekine M."/>
            <person name="Baba S."/>
            <person name="Ankai A."/>
            <person name="Kosugi H."/>
            <person name="Hosoyama A."/>
            <person name="Fukui S."/>
            <person name="Nagai Y."/>
            <person name="Nishijima K."/>
            <person name="Nakazawa H."/>
            <person name="Takamiya M."/>
            <person name="Masuda S."/>
            <person name="Funahashi T."/>
            <person name="Tanaka T."/>
            <person name="Kudoh Y."/>
            <person name="Yamazaki J."/>
            <person name="Kushida N."/>
            <person name="Oguchi A."/>
            <person name="Aoki K."/>
            <person name="Kubota K."/>
            <person name="Nakamura Y."/>
            <person name="Nomura N."/>
            <person name="Sako Y."/>
            <person name="Kikuchi H."/>
        </authorList>
    </citation>
    <scope>NUCLEOTIDE SEQUENCE [LARGE SCALE GENOMIC DNA]</scope>
    <source>
        <strain>ATCC 700893 / DSM 11879 / JCM 9820 / NBRC 100138 / K1</strain>
    </source>
</reference>
<name>THYX_AERPE</name>
<accession>Q9YA75</accession>
<protein>
    <recommendedName>
        <fullName evidence="1">Flavin-dependent thymidylate synthase</fullName>
        <shortName evidence="1">FDTS</shortName>
        <ecNumber evidence="1">2.1.1.148</ecNumber>
    </recommendedName>
    <alternativeName>
        <fullName evidence="1">FAD-dependent thymidylate synthase</fullName>
    </alternativeName>
    <alternativeName>
        <fullName evidence="1">Thymidylate synthase ThyX</fullName>
        <shortName evidence="1">TS</shortName>
        <shortName evidence="1">TSase</shortName>
    </alternativeName>
</protein>
<comment type="function">
    <text evidence="1">Catalyzes the reductive methylation of 2'-deoxyuridine-5'-monophosphate (dUMP) to 2'-deoxythymidine-5'-monophosphate (dTMP) while utilizing 5,10-methylenetetrahydrofolate (mTHF) as the methyl donor, and NADPH and FADH(2) as the reductant.</text>
</comment>
<comment type="catalytic activity">
    <reaction evidence="1">
        <text>dUMP + (6R)-5,10-methylene-5,6,7,8-tetrahydrofolate + NADPH + H(+) = dTMP + (6S)-5,6,7,8-tetrahydrofolate + NADP(+)</text>
        <dbReference type="Rhea" id="RHEA:29043"/>
        <dbReference type="ChEBI" id="CHEBI:15378"/>
        <dbReference type="ChEBI" id="CHEBI:15636"/>
        <dbReference type="ChEBI" id="CHEBI:57453"/>
        <dbReference type="ChEBI" id="CHEBI:57783"/>
        <dbReference type="ChEBI" id="CHEBI:58349"/>
        <dbReference type="ChEBI" id="CHEBI:63528"/>
        <dbReference type="ChEBI" id="CHEBI:246422"/>
        <dbReference type="EC" id="2.1.1.148"/>
    </reaction>
</comment>
<comment type="cofactor">
    <cofactor evidence="1">
        <name>FAD</name>
        <dbReference type="ChEBI" id="CHEBI:57692"/>
    </cofactor>
    <text evidence="1">Binds 4 FAD per tetramer. Each FAD binding site is formed by three monomers.</text>
</comment>
<comment type="pathway">
    <text evidence="1">Pyrimidine metabolism; dTTP biosynthesis.</text>
</comment>
<comment type="subunit">
    <text evidence="1">Homotetramer.</text>
</comment>
<comment type="similarity">
    <text evidence="1">Belongs to the thymidylate synthase ThyX family.</text>
</comment>